<keyword id="KW-0929">Antimicrobial</keyword>
<keyword id="KW-1015">Disulfide bond</keyword>
<keyword id="KW-0295">Fungicide</keyword>
<keyword id="KW-0611">Plant defense</keyword>
<keyword id="KW-1185">Reference proteome</keyword>
<keyword id="KW-0964">Secreted</keyword>
<keyword id="KW-0732">Signal</keyword>
<organism>
    <name type="scientific">Arabidopsis thaliana</name>
    <name type="common">Mouse-ear cress</name>
    <dbReference type="NCBI Taxonomy" id="3702"/>
    <lineage>
        <taxon>Eukaryota</taxon>
        <taxon>Viridiplantae</taxon>
        <taxon>Streptophyta</taxon>
        <taxon>Embryophyta</taxon>
        <taxon>Tracheophyta</taxon>
        <taxon>Spermatophyta</taxon>
        <taxon>Magnoliopsida</taxon>
        <taxon>eudicotyledons</taxon>
        <taxon>Gunneridae</taxon>
        <taxon>Pentapetalae</taxon>
        <taxon>rosids</taxon>
        <taxon>malvids</taxon>
        <taxon>Brassicales</taxon>
        <taxon>Brassicaceae</taxon>
        <taxon>Camelineae</taxon>
        <taxon>Arabidopsis</taxon>
    </lineage>
</organism>
<proteinExistence type="inferred from homology"/>
<feature type="signal peptide" evidence="2">
    <location>
        <begin position="1"/>
        <end position="26"/>
    </location>
</feature>
<feature type="chain" id="PRO_0000379620" description="Putative defensin-like protein 38">
    <location>
        <begin position="27"/>
        <end position="84"/>
    </location>
</feature>
<feature type="disulfide bond" evidence="1">
    <location>
        <begin position="28"/>
        <end position="84"/>
    </location>
</feature>
<feature type="disulfide bond" evidence="1">
    <location>
        <begin position="41"/>
        <end position="65"/>
    </location>
</feature>
<feature type="disulfide bond" evidence="1">
    <location>
        <begin position="50"/>
        <end position="76"/>
    </location>
</feature>
<feature type="disulfide bond" evidence="1">
    <location>
        <begin position="54"/>
        <end position="78"/>
    </location>
</feature>
<sequence>MASSKNGTVLFVSLMILLLISTGVKAYCERVRSRSAPHDICKKKNGNAVCKEKCWTIEKYQNGRCLILPKTTKLDCYCYHFDQC</sequence>
<comment type="subcellular location">
    <subcellularLocation>
        <location evidence="1">Secreted</location>
    </subcellularLocation>
</comment>
<comment type="similarity">
    <text evidence="3">Belongs to the DEFL family.</text>
</comment>
<dbReference type="EMBL" id="AC006954">
    <property type="status" value="NOT_ANNOTATED_CDS"/>
    <property type="molecule type" value="Genomic_DNA"/>
</dbReference>
<dbReference type="EMBL" id="CP002685">
    <property type="protein sequence ID" value="AEC07602.1"/>
    <property type="molecule type" value="Genomic_DNA"/>
</dbReference>
<dbReference type="RefSeq" id="NP_001031408.1">
    <property type="nucleotide sequence ID" value="NM_001036331.2"/>
</dbReference>
<dbReference type="SMR" id="Q2V462"/>
<dbReference type="PaxDb" id="3702-AT2G24615.1"/>
<dbReference type="ProteomicsDB" id="224180"/>
<dbReference type="EnsemblPlants" id="AT2G24615.1">
    <property type="protein sequence ID" value="AT2G24615.1"/>
    <property type="gene ID" value="AT2G24615"/>
</dbReference>
<dbReference type="GeneID" id="3768450"/>
<dbReference type="Gramene" id="AT2G24615.1">
    <property type="protein sequence ID" value="AT2G24615.1"/>
    <property type="gene ID" value="AT2G24615"/>
</dbReference>
<dbReference type="KEGG" id="ath:AT2G24615"/>
<dbReference type="Araport" id="AT2G24615"/>
<dbReference type="TAIR" id="AT2G24615"/>
<dbReference type="HOGENOM" id="CLU_191724_0_0_1"/>
<dbReference type="InParanoid" id="Q2V462"/>
<dbReference type="OMA" id="SAPHDIC"/>
<dbReference type="PhylomeDB" id="Q2V462"/>
<dbReference type="PRO" id="PR:Q2V462"/>
<dbReference type="Proteomes" id="UP000006548">
    <property type="component" value="Chromosome 2"/>
</dbReference>
<dbReference type="ExpressionAtlas" id="Q2V462">
    <property type="expression patterns" value="baseline"/>
</dbReference>
<dbReference type="GO" id="GO:0005576">
    <property type="term" value="C:extracellular region"/>
    <property type="evidence" value="ECO:0007669"/>
    <property type="project" value="UniProtKB-SubCell"/>
</dbReference>
<dbReference type="GO" id="GO:0050832">
    <property type="term" value="P:defense response to fungus"/>
    <property type="evidence" value="ECO:0007669"/>
    <property type="project" value="UniProtKB-KW"/>
</dbReference>
<dbReference type="GO" id="GO:0031640">
    <property type="term" value="P:killing of cells of another organism"/>
    <property type="evidence" value="ECO:0007669"/>
    <property type="project" value="UniProtKB-KW"/>
</dbReference>
<protein>
    <recommendedName>
        <fullName>Putative defensin-like protein 38</fullName>
    </recommendedName>
</protein>
<evidence type="ECO:0000250" key="1"/>
<evidence type="ECO:0000255" key="2"/>
<evidence type="ECO:0000305" key="3"/>
<reference key="1">
    <citation type="journal article" date="1999" name="Nature">
        <title>Sequence and analysis of chromosome 2 of the plant Arabidopsis thaliana.</title>
        <authorList>
            <person name="Lin X."/>
            <person name="Kaul S."/>
            <person name="Rounsley S.D."/>
            <person name="Shea T.P."/>
            <person name="Benito M.-I."/>
            <person name="Town C.D."/>
            <person name="Fujii C.Y."/>
            <person name="Mason T.M."/>
            <person name="Bowman C.L."/>
            <person name="Barnstead M.E."/>
            <person name="Feldblyum T.V."/>
            <person name="Buell C.R."/>
            <person name="Ketchum K.A."/>
            <person name="Lee J.J."/>
            <person name="Ronning C.M."/>
            <person name="Koo H.L."/>
            <person name="Moffat K.S."/>
            <person name="Cronin L.A."/>
            <person name="Shen M."/>
            <person name="Pai G."/>
            <person name="Van Aken S."/>
            <person name="Umayam L."/>
            <person name="Tallon L.J."/>
            <person name="Gill J.E."/>
            <person name="Adams M.D."/>
            <person name="Carrera A.J."/>
            <person name="Creasy T.H."/>
            <person name="Goodman H.M."/>
            <person name="Somerville C.R."/>
            <person name="Copenhaver G.P."/>
            <person name="Preuss D."/>
            <person name="Nierman W.C."/>
            <person name="White O."/>
            <person name="Eisen J.A."/>
            <person name="Salzberg S.L."/>
            <person name="Fraser C.M."/>
            <person name="Venter J.C."/>
        </authorList>
    </citation>
    <scope>NUCLEOTIDE SEQUENCE [LARGE SCALE GENOMIC DNA]</scope>
    <source>
        <strain>cv. Columbia</strain>
    </source>
</reference>
<reference key="2">
    <citation type="journal article" date="2017" name="Plant J.">
        <title>Araport11: a complete reannotation of the Arabidopsis thaliana reference genome.</title>
        <authorList>
            <person name="Cheng C.Y."/>
            <person name="Krishnakumar V."/>
            <person name="Chan A.P."/>
            <person name="Thibaud-Nissen F."/>
            <person name="Schobel S."/>
            <person name="Town C.D."/>
        </authorList>
    </citation>
    <scope>GENOME REANNOTATION</scope>
    <source>
        <strain>cv. Columbia</strain>
    </source>
</reference>
<reference key="3">
    <citation type="journal article" date="2005" name="Plant Physiol.">
        <title>Genome organization of more than 300 defensin-like genes in Arabidopsis.</title>
        <authorList>
            <person name="Silverstein K.A.T."/>
            <person name="Graham M.A."/>
            <person name="Paape T.D."/>
            <person name="VandenBosch K.A."/>
        </authorList>
    </citation>
    <scope>GENE FAMILY</scope>
</reference>
<gene>
    <name type="ordered locus">At2g24615</name>
    <name type="ORF">F25P17</name>
</gene>
<accession>Q2V462</accession>
<name>DEF38_ARATH</name>